<reference key="1">
    <citation type="journal article" date="2012" name="Plant Physiol.">
        <title>A novel lactone-forming carboxylesterase: molecular identification of a tuliposide a-converting enzyme in tulip.</title>
        <authorList>
            <person name="Nomura T."/>
            <person name="Ogita S."/>
            <person name="Kato Y."/>
        </authorList>
    </citation>
    <scope>NUCLEOTIDE SEQUENCE [MRNA]</scope>
    <scope>PROTEIN SEQUENCE OF 78-87; 96-107 AND 318-328</scope>
    <scope>FUNCTION</scope>
    <scope>CATALYTIC ACTIVITY</scope>
    <scope>ACTIVE SITES</scope>
    <scope>BIOPHYSICOCHEMICAL PROPERTIES</scope>
    <scope>ACTIVITY REGULATION</scope>
    <scope>MUTAGENESIS OF GLY-152; GLY-153; GLY-154; SER-235; ASP-327; HIS-359 AND HIS-362</scope>
    <scope>TISSUE SPECIFICITY</scope>
    <scope>SUBCELLULAR LOCATION</scope>
    <scope>SUBUNIT</scope>
    <source>
        <tissue>Petal</tissue>
    </source>
</reference>
<name>TCEA1_TULGE</name>
<protein>
    <recommendedName>
        <fullName>Tuliposide A-converting enzyme 1, chloroplastic</fullName>
        <shortName>TgTCEA1</shortName>
        <ecNumber>4.2.99.22</ecNumber>
    </recommendedName>
</protein>
<dbReference type="EC" id="4.2.99.22"/>
<dbReference type="EMBL" id="AB569208">
    <property type="protein sequence ID" value="BAM20978.1"/>
    <property type="molecule type" value="mRNA"/>
</dbReference>
<dbReference type="EMBL" id="AB569212">
    <property type="protein sequence ID" value="BAM20982.1"/>
    <property type="molecule type" value="mRNA"/>
</dbReference>
<dbReference type="SMR" id="I4DST8"/>
<dbReference type="ESTHER" id="tulge-tcea1">
    <property type="family name" value="Plant_carboxylesterase"/>
</dbReference>
<dbReference type="KEGG" id="ag:BAM20978"/>
<dbReference type="BRENDA" id="4.2.99.22">
    <property type="organism ID" value="6538"/>
</dbReference>
<dbReference type="BRENDA" id="4.2.99.23">
    <property type="organism ID" value="6538"/>
</dbReference>
<dbReference type="GO" id="GO:0009507">
    <property type="term" value="C:chloroplast"/>
    <property type="evidence" value="ECO:0007669"/>
    <property type="project" value="UniProtKB-SubCell"/>
</dbReference>
<dbReference type="GO" id="GO:0016787">
    <property type="term" value="F:hydrolase activity"/>
    <property type="evidence" value="ECO:0007669"/>
    <property type="project" value="InterPro"/>
</dbReference>
<dbReference type="GO" id="GO:0016829">
    <property type="term" value="F:lyase activity"/>
    <property type="evidence" value="ECO:0007669"/>
    <property type="project" value="UniProtKB-KW"/>
</dbReference>
<dbReference type="GO" id="GO:0006952">
    <property type="term" value="P:defense response"/>
    <property type="evidence" value="ECO:0007669"/>
    <property type="project" value="UniProtKB-KW"/>
</dbReference>
<dbReference type="Gene3D" id="3.40.50.1820">
    <property type="entry name" value="alpha/beta hydrolase"/>
    <property type="match status" value="1"/>
</dbReference>
<dbReference type="InterPro" id="IPR013094">
    <property type="entry name" value="AB_hydrolase_3"/>
</dbReference>
<dbReference type="InterPro" id="IPR029058">
    <property type="entry name" value="AB_hydrolase_fold"/>
</dbReference>
<dbReference type="InterPro" id="IPR050466">
    <property type="entry name" value="Carboxylest/Gibb_receptor"/>
</dbReference>
<dbReference type="PANTHER" id="PTHR23024">
    <property type="entry name" value="ARYLACETAMIDE DEACETYLASE"/>
    <property type="match status" value="1"/>
</dbReference>
<dbReference type="PANTHER" id="PTHR23024:SF577">
    <property type="entry name" value="CARBOXYLESTERASE 2-RELATED"/>
    <property type="match status" value="1"/>
</dbReference>
<dbReference type="Pfam" id="PF07859">
    <property type="entry name" value="Abhydrolase_3"/>
    <property type="match status" value="1"/>
</dbReference>
<dbReference type="SUPFAM" id="SSF53474">
    <property type="entry name" value="alpha/beta-Hydrolases"/>
    <property type="match status" value="1"/>
</dbReference>
<proteinExistence type="evidence at protein level"/>
<gene>
    <name type="primary">TCEA1</name>
    <name type="synonym">TCEA5</name>
</gene>
<comment type="function">
    <text evidence="1">Lactone-forming carboxylesterases, specifically catalyzing intramolecular transesterification, but not hydrolysis. Involved in the biosynthesis of tulipalins, defensive chemicals that show antimicrobial activities against a broad range of strains of bacteria and fungi. Substrates are 6-tuliposide A &gt; 6-tuliposide B.</text>
</comment>
<comment type="catalytic activity">
    <reaction evidence="1">
        <text>6-tuliposide A = tulipalin A + D-glucose</text>
        <dbReference type="Rhea" id="RHEA:36071"/>
        <dbReference type="ChEBI" id="CHEBI:4167"/>
        <dbReference type="ChEBI" id="CHEBI:72781"/>
        <dbReference type="ChEBI" id="CHEBI:104120"/>
        <dbReference type="EC" id="4.2.99.22"/>
    </reaction>
</comment>
<comment type="activity regulation">
    <text evidence="1">Inhibited by NaF, AgNO(3), HgCl(2), CuSO(4) and phenylmethylsulfonyl fluoride (PMSF).</text>
</comment>
<comment type="biophysicochemical properties">
    <kinetics>
        <KM evidence="1">18 mM for 6-tuliposide A</KM>
        <KM evidence="1">71 mM for 6-tuliposide B</KM>
        <text>kcat is 2800 sec(-1) with 6-tuliposide A as substrate. kcat is 510 sec(-1) with 6-tuliposide B as substrate.</text>
    </kinetics>
    <phDependence>
        <text evidence="1">Optimum pH is 6.5-7.5.</text>
    </phDependence>
    <temperatureDependence>
        <text evidence="1">Optimum temperature is 35-45 degrees Celsius.</text>
    </temperatureDependence>
</comment>
<comment type="subunit">
    <text evidence="1">Homodimer.</text>
</comment>
<comment type="subcellular location">
    <subcellularLocation>
        <location evidence="1">Plastid</location>
        <location evidence="1">Chloroplast</location>
    </subcellularLocation>
</comment>
<comment type="tissue specificity">
    <text evidence="1">Expressed in roots, stems, leaves, petals, stamens and pistils, but not in bulb scales.</text>
</comment>
<comment type="miscellaneous">
    <text evidence="3">6-tuliposide A and tuliposide A-converting enzyme, which are compartmentalized in the vacuoles and plastids respectively, come into contact with each other for the enzyme reaction releasing toxic tulipalin A upon cell disruption by pathogen infection or herbivore predation.</text>
</comment>
<comment type="similarity">
    <text evidence="2">Belongs to the AB hydrolase superfamily.</text>
</comment>
<feature type="transit peptide" description="Chloroplast" evidence="1">
    <location>
        <begin position="1"/>
        <end position="77"/>
    </location>
</feature>
<feature type="chain" id="PRO_0000423865" description="Tuliposide A-converting enzyme 1, chloroplastic">
    <location>
        <begin position="78"/>
        <end position="385"/>
    </location>
</feature>
<feature type="active site" description="Acyl-ester intermediate" evidence="3">
    <location>
        <position position="235"/>
    </location>
</feature>
<feature type="active site" description="Charge relay system" evidence="3">
    <location>
        <position position="327"/>
    </location>
</feature>
<feature type="active site" description="Charge relay system" evidence="3">
    <location>
        <position position="359"/>
    </location>
</feature>
<feature type="mutagenesis site" description="Loss of activity." evidence="1">
    <original>G</original>
    <variation>A</variation>
    <location>
        <position position="152"/>
    </location>
</feature>
<feature type="mutagenesis site" description="Loss of activity." evidence="1">
    <original>G</original>
    <variation>A</variation>
    <location>
        <position position="153"/>
    </location>
</feature>
<feature type="mutagenesis site" description="12% reduction of activity." evidence="1">
    <original>G</original>
    <variation>A</variation>
    <location>
        <position position="154"/>
    </location>
</feature>
<feature type="mutagenesis site" description="Loss of activity." evidence="1">
    <original>S</original>
    <variation>A</variation>
    <location>
        <position position="235"/>
    </location>
</feature>
<feature type="mutagenesis site" description="Loss of activity." evidence="1">
    <original>D</original>
    <variation>N</variation>
    <location>
        <position position="327"/>
    </location>
</feature>
<feature type="mutagenesis site" description="Loss of activity." evidence="1">
    <original>H</original>
    <variation>A</variation>
    <location>
        <position position="359"/>
    </location>
</feature>
<feature type="mutagenesis site" description="94% reduction of activity." evidence="1">
    <original>H</original>
    <variation>A</variation>
    <location>
        <position position="362"/>
    </location>
</feature>
<feature type="sequence conflict" description="In Ref. 1; BAM20982." evidence="2" ref="1">
    <original>A</original>
    <variation>S</variation>
    <location>
        <position position="324"/>
    </location>
</feature>
<sequence>MSVASFFSSLPARPFGYKDGRGRTGMVPTTDIGRRMVKPPVLACRPIESNTYHGSVTSVFLTKSSRSPSPSLSPTPTALDDEIVLDLKPFLIIYKSGRIERFLGTTVIPACPEVATKDVVIDPATGVSVRLYLPNVVDLPSKKLPVLVYFHGGGFVIENTGSPNYHNYLTLLAAKAGVLIVSINYRLAPEYPLPASYDDCMAGFNWVVSHSAGPALEPWLAQHGDFSQILLSGDSAGGNVTHYVAMRADAGVIEGVAIVHPYFLGSEPVGNEINDPANIEFHDKLWRLAAPDTEGLDDPLINPVAPGAPSLAGLKCKRAVVFVAGNDFLVERGRMYYEALVKSGWRGEAELVQHEGVGHVFHLSDYSGDISVAMMTKLIAFLKGE</sequence>
<accession>I4DST8</accession>
<accession>I4DSU2</accession>
<organism>
    <name type="scientific">Tulipa gesneriana</name>
    <name type="common">Garden tulip</name>
    <dbReference type="NCBI Taxonomy" id="13306"/>
    <lineage>
        <taxon>Eukaryota</taxon>
        <taxon>Viridiplantae</taxon>
        <taxon>Streptophyta</taxon>
        <taxon>Embryophyta</taxon>
        <taxon>Tracheophyta</taxon>
        <taxon>Spermatophyta</taxon>
        <taxon>Magnoliopsida</taxon>
        <taxon>Liliopsida</taxon>
        <taxon>Liliales</taxon>
        <taxon>Liliaceae</taxon>
        <taxon>Tulipa</taxon>
    </lineage>
</organism>
<evidence type="ECO:0000269" key="1">
    <source>
    </source>
</evidence>
<evidence type="ECO:0000305" key="2"/>
<evidence type="ECO:0000305" key="3">
    <source>
    </source>
</evidence>
<keyword id="KW-0150">Chloroplast</keyword>
<keyword id="KW-0903">Direct protein sequencing</keyword>
<keyword id="KW-0456">Lyase</keyword>
<keyword id="KW-0611">Plant defense</keyword>
<keyword id="KW-0934">Plastid</keyword>
<keyword id="KW-0809">Transit peptide</keyword>